<keyword id="KW-0030">Aminoacyl-tRNA synthetase</keyword>
<keyword id="KW-0067">ATP-binding</keyword>
<keyword id="KW-0963">Cytoplasm</keyword>
<keyword id="KW-0436">Ligase</keyword>
<keyword id="KW-0460">Magnesium</keyword>
<keyword id="KW-0479">Metal-binding</keyword>
<keyword id="KW-0547">Nucleotide-binding</keyword>
<keyword id="KW-0648">Protein biosynthesis</keyword>
<keyword id="KW-1185">Reference proteome</keyword>
<keyword id="KW-0694">RNA-binding</keyword>
<keyword id="KW-0820">tRNA-binding</keyword>
<feature type="chain" id="PRO_0000126964" description="Phenylalanine--tRNA ligase beta subunit">
    <location>
        <begin position="1"/>
        <end position="801"/>
    </location>
</feature>
<feature type="domain" description="tRNA-binding" evidence="1">
    <location>
        <begin position="39"/>
        <end position="153"/>
    </location>
</feature>
<feature type="domain" description="B5" evidence="1">
    <location>
        <begin position="406"/>
        <end position="481"/>
    </location>
</feature>
<feature type="domain" description="FDX-ACB" evidence="1">
    <location>
        <begin position="708"/>
        <end position="801"/>
    </location>
</feature>
<feature type="binding site" evidence="1">
    <location>
        <position position="459"/>
    </location>
    <ligand>
        <name>Mg(2+)</name>
        <dbReference type="ChEBI" id="CHEBI:18420"/>
        <note>shared with alpha subunit</note>
    </ligand>
</feature>
<feature type="binding site" evidence="1">
    <location>
        <position position="465"/>
    </location>
    <ligand>
        <name>Mg(2+)</name>
        <dbReference type="ChEBI" id="CHEBI:18420"/>
        <note>shared with alpha subunit</note>
    </ligand>
</feature>
<feature type="binding site" evidence="1">
    <location>
        <position position="468"/>
    </location>
    <ligand>
        <name>Mg(2+)</name>
        <dbReference type="ChEBI" id="CHEBI:18420"/>
        <note>shared with alpha subunit</note>
    </ligand>
</feature>
<feature type="binding site" evidence="1">
    <location>
        <position position="469"/>
    </location>
    <ligand>
        <name>Mg(2+)</name>
        <dbReference type="ChEBI" id="CHEBI:18420"/>
        <note>shared with alpha subunit</note>
    </ligand>
</feature>
<name>SYFB_STRP1</name>
<protein>
    <recommendedName>
        <fullName evidence="1">Phenylalanine--tRNA ligase beta subunit</fullName>
        <ecNumber evidence="1">6.1.1.20</ecNumber>
    </recommendedName>
    <alternativeName>
        <fullName evidence="1">Phenylalanyl-tRNA synthetase beta subunit</fullName>
        <shortName evidence="1">PheRS</shortName>
    </alternativeName>
</protein>
<proteinExistence type="inferred from homology"/>
<gene>
    <name evidence="1" type="primary">pheT</name>
    <name type="ordered locus">SPy_0769</name>
    <name type="ordered locus">M5005_Spy0588</name>
</gene>
<sequence length="801" mass="87267">MLVSYKWLKELVDIDVTPAALAEKMSTTGIEVEGIEVPADGLSKLVVGHVLSCEDVPETHLHLCQVDTGDETPRQIVCGAPNVKAGIKVIVAVPGARIADNYKIKKGKIRGMESLGMICSLQELGLSDSIIPKEFSDGIQILPEEAVPGDAIFKYLDLDDHIIELSITPNRADALSMRGVAHEVAAIYGKSVSFPQKNLQESDKATSEAIEVAIASDNVLTYASRVVENVKVKPSPQWLQNLLMNAGIRPINNVVDVTNYVLLYFGQPMHAFDYDKFEDHKIVARAARQGESLVTLDGEKRDLTTEDLVITVADKPVALAGVMGGQATEIDANSQTVVLEAAVFDGKSIRKTSGRLNLRSESSSRFEKGVNYATVLEALDFAAAMLQELAEGQVLSGHVQAGQLPTEPVEVSTSLDYVNVRLGTELTFADIQRIFDQLGFGLTGDETSFTVAVPRRRWDVSIPADLVEEIARIYGYDKLPTTLPEAGGTAAELTPTQALRRKVRGLAEGLGLTEIISYALTTPEKAVEFAVAPSHLTELMWPMSVERSALRQNMVSGMLDTVAYNVARKQSNLALYEIGKIFEQEANPKEDLPNEVNHFAFAICGLVAQKDFQTQAQAVDFYHAKGNLDTLFANLNLKVQYVPTKDLANMHPGRTALILLDEQVIGFVGQVHPGTAKAYSIPETYVAELDMAALEAALPSDQTFAEITKFPAMTRDVALLLDREVSHQAIVTAIESAGVKRLTSIKLFDVYEGATIQAGKKSMAYSLTFQNPNDNLTDEEVAKYMEKITKALTEQVGAEVR</sequence>
<comment type="catalytic activity">
    <reaction evidence="1">
        <text>tRNA(Phe) + L-phenylalanine + ATP = L-phenylalanyl-tRNA(Phe) + AMP + diphosphate + H(+)</text>
        <dbReference type="Rhea" id="RHEA:19413"/>
        <dbReference type="Rhea" id="RHEA-COMP:9668"/>
        <dbReference type="Rhea" id="RHEA-COMP:9699"/>
        <dbReference type="ChEBI" id="CHEBI:15378"/>
        <dbReference type="ChEBI" id="CHEBI:30616"/>
        <dbReference type="ChEBI" id="CHEBI:33019"/>
        <dbReference type="ChEBI" id="CHEBI:58095"/>
        <dbReference type="ChEBI" id="CHEBI:78442"/>
        <dbReference type="ChEBI" id="CHEBI:78531"/>
        <dbReference type="ChEBI" id="CHEBI:456215"/>
        <dbReference type="EC" id="6.1.1.20"/>
    </reaction>
</comment>
<comment type="cofactor">
    <cofactor evidence="1">
        <name>Mg(2+)</name>
        <dbReference type="ChEBI" id="CHEBI:18420"/>
    </cofactor>
    <text evidence="1">Binds 2 magnesium ions per tetramer.</text>
</comment>
<comment type="subunit">
    <text evidence="1">Tetramer of two alpha and two beta subunits.</text>
</comment>
<comment type="subcellular location">
    <subcellularLocation>
        <location>Cytoplasm</location>
    </subcellularLocation>
</comment>
<comment type="similarity">
    <text evidence="1">Belongs to the phenylalanyl-tRNA synthetase beta subunit family. Type 1 subfamily.</text>
</comment>
<comment type="sequence caution" evidence="2">
    <conflict type="erroneous initiation">
        <sequence resource="EMBL-CDS" id="AAZ51206"/>
    </conflict>
</comment>
<accession>Q9A0I0</accession>
<accession>Q48ZL2</accession>
<organism>
    <name type="scientific">Streptococcus pyogenes serotype M1</name>
    <dbReference type="NCBI Taxonomy" id="301447"/>
    <lineage>
        <taxon>Bacteria</taxon>
        <taxon>Bacillati</taxon>
        <taxon>Bacillota</taxon>
        <taxon>Bacilli</taxon>
        <taxon>Lactobacillales</taxon>
        <taxon>Streptococcaceae</taxon>
        <taxon>Streptococcus</taxon>
    </lineage>
</organism>
<dbReference type="EC" id="6.1.1.20" evidence="1"/>
<dbReference type="EMBL" id="AE004092">
    <property type="protein sequence ID" value="AAK33710.1"/>
    <property type="molecule type" value="Genomic_DNA"/>
</dbReference>
<dbReference type="EMBL" id="CP000017">
    <property type="protein sequence ID" value="AAZ51206.1"/>
    <property type="status" value="ALT_INIT"/>
    <property type="molecule type" value="Genomic_DNA"/>
</dbReference>
<dbReference type="RefSeq" id="NP_268989.1">
    <property type="nucleotide sequence ID" value="NC_002737.2"/>
</dbReference>
<dbReference type="SMR" id="Q9A0I0"/>
<dbReference type="PaxDb" id="1314-HKU360_00599"/>
<dbReference type="KEGG" id="spy:SPy_0769"/>
<dbReference type="KEGG" id="spz:M5005_Spy0588"/>
<dbReference type="PATRIC" id="fig|160490.10.peg.656"/>
<dbReference type="HOGENOM" id="CLU_016891_0_0_9"/>
<dbReference type="OMA" id="PSPLWMQ"/>
<dbReference type="Proteomes" id="UP000000750">
    <property type="component" value="Chromosome"/>
</dbReference>
<dbReference type="GO" id="GO:0009328">
    <property type="term" value="C:phenylalanine-tRNA ligase complex"/>
    <property type="evidence" value="ECO:0007669"/>
    <property type="project" value="TreeGrafter"/>
</dbReference>
<dbReference type="GO" id="GO:0005524">
    <property type="term" value="F:ATP binding"/>
    <property type="evidence" value="ECO:0007669"/>
    <property type="project" value="UniProtKB-UniRule"/>
</dbReference>
<dbReference type="GO" id="GO:0140096">
    <property type="term" value="F:catalytic activity, acting on a protein"/>
    <property type="evidence" value="ECO:0007669"/>
    <property type="project" value="UniProtKB-ARBA"/>
</dbReference>
<dbReference type="GO" id="GO:0000287">
    <property type="term" value="F:magnesium ion binding"/>
    <property type="evidence" value="ECO:0007669"/>
    <property type="project" value="UniProtKB-UniRule"/>
</dbReference>
<dbReference type="GO" id="GO:0004826">
    <property type="term" value="F:phenylalanine-tRNA ligase activity"/>
    <property type="evidence" value="ECO:0007669"/>
    <property type="project" value="UniProtKB-UniRule"/>
</dbReference>
<dbReference type="GO" id="GO:0016740">
    <property type="term" value="F:transferase activity"/>
    <property type="evidence" value="ECO:0007669"/>
    <property type="project" value="UniProtKB-ARBA"/>
</dbReference>
<dbReference type="GO" id="GO:0000049">
    <property type="term" value="F:tRNA binding"/>
    <property type="evidence" value="ECO:0007669"/>
    <property type="project" value="UniProtKB-KW"/>
</dbReference>
<dbReference type="GO" id="GO:0006432">
    <property type="term" value="P:phenylalanyl-tRNA aminoacylation"/>
    <property type="evidence" value="ECO:0007669"/>
    <property type="project" value="UniProtKB-UniRule"/>
</dbReference>
<dbReference type="CDD" id="cd00769">
    <property type="entry name" value="PheRS_beta_core"/>
    <property type="match status" value="1"/>
</dbReference>
<dbReference type="CDD" id="cd02796">
    <property type="entry name" value="tRNA_bind_bactPheRS"/>
    <property type="match status" value="1"/>
</dbReference>
<dbReference type="FunFam" id="2.40.50.140:FF:000045">
    <property type="entry name" value="Phenylalanine--tRNA ligase beta subunit"/>
    <property type="match status" value="1"/>
</dbReference>
<dbReference type="FunFam" id="3.30.70.380:FF:000001">
    <property type="entry name" value="Phenylalanine--tRNA ligase beta subunit"/>
    <property type="match status" value="1"/>
</dbReference>
<dbReference type="FunFam" id="3.30.930.10:FF:000022">
    <property type="entry name" value="Phenylalanine--tRNA ligase beta subunit"/>
    <property type="match status" value="1"/>
</dbReference>
<dbReference type="FunFam" id="3.50.40.10:FF:000001">
    <property type="entry name" value="Phenylalanine--tRNA ligase beta subunit"/>
    <property type="match status" value="1"/>
</dbReference>
<dbReference type="Gene3D" id="3.30.56.10">
    <property type="match status" value="2"/>
</dbReference>
<dbReference type="Gene3D" id="3.30.930.10">
    <property type="entry name" value="Bira Bifunctional Protein, Domain 2"/>
    <property type="match status" value="1"/>
</dbReference>
<dbReference type="Gene3D" id="3.30.70.380">
    <property type="entry name" value="Ferrodoxin-fold anticodon-binding domain"/>
    <property type="match status" value="1"/>
</dbReference>
<dbReference type="Gene3D" id="2.40.50.140">
    <property type="entry name" value="Nucleic acid-binding proteins"/>
    <property type="match status" value="1"/>
</dbReference>
<dbReference type="Gene3D" id="3.50.40.10">
    <property type="entry name" value="Phenylalanyl-trna Synthetase, Chain B, domain 3"/>
    <property type="match status" value="1"/>
</dbReference>
<dbReference type="HAMAP" id="MF_00283">
    <property type="entry name" value="Phe_tRNA_synth_beta1"/>
    <property type="match status" value="1"/>
</dbReference>
<dbReference type="InterPro" id="IPR045864">
    <property type="entry name" value="aa-tRNA-synth_II/BPL/LPL"/>
</dbReference>
<dbReference type="InterPro" id="IPR005146">
    <property type="entry name" value="B3/B4_tRNA-bd"/>
</dbReference>
<dbReference type="InterPro" id="IPR009061">
    <property type="entry name" value="DNA-bd_dom_put_sf"/>
</dbReference>
<dbReference type="InterPro" id="IPR005121">
    <property type="entry name" value="Fdx_antiC-bd"/>
</dbReference>
<dbReference type="InterPro" id="IPR036690">
    <property type="entry name" value="Fdx_antiC-bd_sf"/>
</dbReference>
<dbReference type="InterPro" id="IPR012340">
    <property type="entry name" value="NA-bd_OB-fold"/>
</dbReference>
<dbReference type="InterPro" id="IPR045060">
    <property type="entry name" value="Phe-tRNA-ligase_IIc_bsu"/>
</dbReference>
<dbReference type="InterPro" id="IPR004532">
    <property type="entry name" value="Phe-tRNA-ligase_IIc_bsu_bact"/>
</dbReference>
<dbReference type="InterPro" id="IPR020825">
    <property type="entry name" value="Phe-tRNA_synthase-like_B3/B4"/>
</dbReference>
<dbReference type="InterPro" id="IPR041616">
    <property type="entry name" value="PheRS_beta_core"/>
</dbReference>
<dbReference type="InterPro" id="IPR002547">
    <property type="entry name" value="tRNA-bd_dom"/>
</dbReference>
<dbReference type="InterPro" id="IPR033714">
    <property type="entry name" value="tRNA_bind_bactPheRS"/>
</dbReference>
<dbReference type="InterPro" id="IPR005147">
    <property type="entry name" value="tRNA_synthase_B5-dom"/>
</dbReference>
<dbReference type="NCBIfam" id="TIGR00472">
    <property type="entry name" value="pheT_bact"/>
    <property type="match status" value="1"/>
</dbReference>
<dbReference type="NCBIfam" id="NF045760">
    <property type="entry name" value="YtpR"/>
    <property type="match status" value="1"/>
</dbReference>
<dbReference type="PANTHER" id="PTHR10947:SF0">
    <property type="entry name" value="PHENYLALANINE--TRNA LIGASE BETA SUBUNIT"/>
    <property type="match status" value="1"/>
</dbReference>
<dbReference type="PANTHER" id="PTHR10947">
    <property type="entry name" value="PHENYLALANYL-TRNA SYNTHETASE BETA CHAIN AND LEUCINE-RICH REPEAT-CONTAINING PROTEIN 47"/>
    <property type="match status" value="1"/>
</dbReference>
<dbReference type="Pfam" id="PF03483">
    <property type="entry name" value="B3_4"/>
    <property type="match status" value="1"/>
</dbReference>
<dbReference type="Pfam" id="PF03484">
    <property type="entry name" value="B5"/>
    <property type="match status" value="1"/>
</dbReference>
<dbReference type="Pfam" id="PF03147">
    <property type="entry name" value="FDX-ACB"/>
    <property type="match status" value="1"/>
</dbReference>
<dbReference type="Pfam" id="PF01588">
    <property type="entry name" value="tRNA_bind"/>
    <property type="match status" value="1"/>
</dbReference>
<dbReference type="Pfam" id="PF17759">
    <property type="entry name" value="tRNA_synthFbeta"/>
    <property type="match status" value="1"/>
</dbReference>
<dbReference type="SMART" id="SM00873">
    <property type="entry name" value="B3_4"/>
    <property type="match status" value="1"/>
</dbReference>
<dbReference type="SMART" id="SM00874">
    <property type="entry name" value="B5"/>
    <property type="match status" value="1"/>
</dbReference>
<dbReference type="SMART" id="SM00896">
    <property type="entry name" value="FDX-ACB"/>
    <property type="match status" value="1"/>
</dbReference>
<dbReference type="SUPFAM" id="SSF54991">
    <property type="entry name" value="Anticodon-binding domain of PheRS"/>
    <property type="match status" value="1"/>
</dbReference>
<dbReference type="SUPFAM" id="SSF55681">
    <property type="entry name" value="Class II aaRS and biotin synthetases"/>
    <property type="match status" value="1"/>
</dbReference>
<dbReference type="SUPFAM" id="SSF50249">
    <property type="entry name" value="Nucleic acid-binding proteins"/>
    <property type="match status" value="1"/>
</dbReference>
<dbReference type="SUPFAM" id="SSF56037">
    <property type="entry name" value="PheT/TilS domain"/>
    <property type="match status" value="1"/>
</dbReference>
<dbReference type="SUPFAM" id="SSF46955">
    <property type="entry name" value="Putative DNA-binding domain"/>
    <property type="match status" value="1"/>
</dbReference>
<dbReference type="PROSITE" id="PS51483">
    <property type="entry name" value="B5"/>
    <property type="match status" value="1"/>
</dbReference>
<dbReference type="PROSITE" id="PS51447">
    <property type="entry name" value="FDX_ACB"/>
    <property type="match status" value="1"/>
</dbReference>
<dbReference type="PROSITE" id="PS50886">
    <property type="entry name" value="TRBD"/>
    <property type="match status" value="1"/>
</dbReference>
<evidence type="ECO:0000255" key="1">
    <source>
        <dbReference type="HAMAP-Rule" id="MF_00283"/>
    </source>
</evidence>
<evidence type="ECO:0000305" key="2"/>
<reference key="1">
    <citation type="journal article" date="2001" name="Proc. Natl. Acad. Sci. U.S.A.">
        <title>Complete genome sequence of an M1 strain of Streptococcus pyogenes.</title>
        <authorList>
            <person name="Ferretti J.J."/>
            <person name="McShan W.M."/>
            <person name="Ajdic D.J."/>
            <person name="Savic D.J."/>
            <person name="Savic G."/>
            <person name="Lyon K."/>
            <person name="Primeaux C."/>
            <person name="Sezate S."/>
            <person name="Suvorov A.N."/>
            <person name="Kenton S."/>
            <person name="Lai H.S."/>
            <person name="Lin S.P."/>
            <person name="Qian Y."/>
            <person name="Jia H.G."/>
            <person name="Najar F.Z."/>
            <person name="Ren Q."/>
            <person name="Zhu H."/>
            <person name="Song L."/>
            <person name="White J."/>
            <person name="Yuan X."/>
            <person name="Clifton S.W."/>
            <person name="Roe B.A."/>
            <person name="McLaughlin R.E."/>
        </authorList>
    </citation>
    <scope>NUCLEOTIDE SEQUENCE [LARGE SCALE GENOMIC DNA]</scope>
    <source>
        <strain>ATCC 700294 / SF370 / Serotype M1</strain>
    </source>
</reference>
<reference key="2">
    <citation type="journal article" date="2005" name="J. Infect. Dis.">
        <title>Evolutionary origin and emergence of a highly successful clone of serotype M1 group A Streptococcus involved multiple horizontal gene transfer events.</title>
        <authorList>
            <person name="Sumby P."/>
            <person name="Porcella S.F."/>
            <person name="Madrigal A.G."/>
            <person name="Barbian K.D."/>
            <person name="Virtaneva K."/>
            <person name="Ricklefs S.M."/>
            <person name="Sturdevant D.E."/>
            <person name="Graham M.R."/>
            <person name="Vuopio-Varkila J."/>
            <person name="Hoe N.P."/>
            <person name="Musser J.M."/>
        </authorList>
    </citation>
    <scope>NUCLEOTIDE SEQUENCE [LARGE SCALE GENOMIC DNA]</scope>
    <source>
        <strain>ATCC BAA-947 / MGAS5005 / Serotype M1</strain>
    </source>
</reference>